<sequence>MRGIFFLILILNFIGLIFSVAEDCALSKREDRCGSIFEDLTNCYNSTFKMMLGDCLVTCNACESYTCNNPQPDTTLNCTALAGECNSALFSELMKEKCPATCGKCNRKNANLCSDKSKPDICVNLKTLCNSVEFYDKLSEQCPSTCNRCPHNGTNPENKTGGNGGTGTQECTDLANDCSYNQNRCSVKEYSSLMHRLCPKTCNACNICEDANKMCPIWVPRGFCSKFDHDKVQKSCAKSCNICK</sequence>
<organism>
    <name type="scientific">Caenorhabditis elegans</name>
    <dbReference type="NCBI Taxonomy" id="6239"/>
    <lineage>
        <taxon>Eukaryota</taxon>
        <taxon>Metazoa</taxon>
        <taxon>Ecdysozoa</taxon>
        <taxon>Nematoda</taxon>
        <taxon>Chromadorea</taxon>
        <taxon>Rhabditida</taxon>
        <taxon>Rhabditina</taxon>
        <taxon>Rhabditomorpha</taxon>
        <taxon>Rhabditoidea</taxon>
        <taxon>Rhabditidae</taxon>
        <taxon>Peloderinae</taxon>
        <taxon>Caenorhabditis</taxon>
    </lineage>
</organism>
<keyword id="KW-1015">Disulfide bond</keyword>
<keyword id="KW-0325">Glycoprotein</keyword>
<keyword id="KW-1185">Reference proteome</keyword>
<keyword id="KW-0677">Repeat</keyword>
<keyword id="KW-0732">Signal</keyword>
<evidence type="ECO:0000255" key="1"/>
<evidence type="ECO:0000255" key="2">
    <source>
        <dbReference type="PROSITE-ProRule" id="PRU01005"/>
    </source>
</evidence>
<dbReference type="EMBL" id="Z11126">
    <property type="protein sequence ID" value="CAA77472.3"/>
    <property type="molecule type" value="Genomic_DNA"/>
</dbReference>
<dbReference type="PIR" id="S23244">
    <property type="entry name" value="S23244"/>
</dbReference>
<dbReference type="RefSeq" id="NP_498981.2">
    <property type="nucleotide sequence ID" value="NM_066580.4"/>
</dbReference>
<dbReference type="SMR" id="P30652"/>
<dbReference type="FunCoup" id="P30652">
    <property type="interactions" value="1557"/>
</dbReference>
<dbReference type="STRING" id="6239.ZK643.6.1"/>
<dbReference type="PaxDb" id="6239-ZK643.6"/>
<dbReference type="PeptideAtlas" id="P30652"/>
<dbReference type="EnsemblMetazoa" id="ZK643.6.1">
    <property type="protein sequence ID" value="ZK643.6.1"/>
    <property type="gene ID" value="WBGene00014037"/>
</dbReference>
<dbReference type="GeneID" id="191375"/>
<dbReference type="KEGG" id="cel:CELE_ZK643.6"/>
<dbReference type="UCSC" id="ZK643.6">
    <property type="organism name" value="c. elegans"/>
</dbReference>
<dbReference type="AGR" id="WB:WBGene00014037"/>
<dbReference type="CTD" id="191375"/>
<dbReference type="WormBase" id="ZK643.6">
    <property type="protein sequence ID" value="CE43086"/>
    <property type="gene ID" value="WBGene00014037"/>
</dbReference>
<dbReference type="eggNOG" id="ENOG502T7HW">
    <property type="taxonomic scope" value="Eukaryota"/>
</dbReference>
<dbReference type="GeneTree" id="ENSGT00970000195829"/>
<dbReference type="HOGENOM" id="CLU_102317_0_0_1"/>
<dbReference type="InParanoid" id="P30652"/>
<dbReference type="OMA" id="CNRKNAN"/>
<dbReference type="OrthoDB" id="5819406at2759"/>
<dbReference type="PhylomeDB" id="P30652"/>
<dbReference type="PRO" id="PR:P30652"/>
<dbReference type="Proteomes" id="UP000001940">
    <property type="component" value="Chromosome III"/>
</dbReference>
<dbReference type="Gene3D" id="1.10.10.1940">
    <property type="match status" value="2"/>
</dbReference>
<dbReference type="Gene3D" id="1.10.10.1870">
    <property type="entry name" value="ShTK domain-like"/>
    <property type="match status" value="1"/>
</dbReference>
<dbReference type="InterPro" id="IPR003582">
    <property type="entry name" value="ShKT_dom"/>
</dbReference>
<dbReference type="PANTHER" id="PTHR21724">
    <property type="entry name" value="SHKT DOMAIN-CONTAINING PROTEIN"/>
    <property type="match status" value="1"/>
</dbReference>
<dbReference type="PANTHER" id="PTHR21724:SF109">
    <property type="entry name" value="SHKT DOMAIN-CONTAINING PROTEIN"/>
    <property type="match status" value="1"/>
</dbReference>
<dbReference type="Pfam" id="PF01549">
    <property type="entry name" value="ShK"/>
    <property type="match status" value="4"/>
</dbReference>
<dbReference type="SMART" id="SM00254">
    <property type="entry name" value="ShKT"/>
    <property type="match status" value="4"/>
</dbReference>
<dbReference type="PROSITE" id="PS51670">
    <property type="entry name" value="SHKT"/>
    <property type="match status" value="4"/>
</dbReference>
<accession>P30652</accession>
<protein>
    <recommendedName>
        <fullName>Uncharacterized protein ZK643.6</fullName>
    </recommendedName>
</protein>
<proteinExistence type="inferred from homology"/>
<feature type="signal peptide" evidence="1">
    <location>
        <begin position="1"/>
        <end position="19"/>
    </location>
</feature>
<feature type="chain" id="PRO_0000014304" description="Uncharacterized protein ZK643.6">
    <location>
        <begin position="20"/>
        <end position="244"/>
    </location>
</feature>
<feature type="domain" description="ShKT 1" evidence="2">
    <location>
        <begin position="67"/>
        <end position="105"/>
    </location>
</feature>
<feature type="domain" description="ShKT 2" evidence="2">
    <location>
        <begin position="113"/>
        <end position="149"/>
    </location>
</feature>
<feature type="domain" description="ShKT 3" evidence="2">
    <location>
        <begin position="171"/>
        <end position="205"/>
    </location>
</feature>
<feature type="domain" description="ShKT 4" evidence="2">
    <location>
        <begin position="208"/>
        <end position="243"/>
    </location>
</feature>
<feature type="glycosylation site" description="N-linked (GlcNAc...) asparagine" evidence="1">
    <location>
        <position position="45"/>
    </location>
</feature>
<feature type="glycosylation site" description="N-linked (GlcNAc...) asparagine" evidence="1">
    <location>
        <position position="77"/>
    </location>
</feature>
<feature type="glycosylation site" description="N-linked (GlcNAc...) asparagine" evidence="1">
    <location>
        <position position="152"/>
    </location>
</feature>
<feature type="glycosylation site" description="N-linked (GlcNAc...) asparagine" evidence="1">
    <location>
        <position position="158"/>
    </location>
</feature>
<feature type="disulfide bond" evidence="2">
    <location>
        <begin position="113"/>
        <end position="149"/>
    </location>
</feature>
<feature type="disulfide bond" evidence="2">
    <location>
        <begin position="122"/>
        <end position="142"/>
    </location>
</feature>
<feature type="disulfide bond" evidence="2">
    <location>
        <begin position="129"/>
        <end position="146"/>
    </location>
</feature>
<feature type="disulfide bond" evidence="2">
    <location>
        <begin position="171"/>
        <end position="205"/>
    </location>
</feature>
<feature type="disulfide bond" evidence="2">
    <location>
        <begin position="178"/>
        <end position="198"/>
    </location>
</feature>
<feature type="disulfide bond" evidence="2">
    <location>
        <begin position="185"/>
        <end position="202"/>
    </location>
</feature>
<feature type="disulfide bond" evidence="2">
    <location>
        <begin position="208"/>
        <end position="243"/>
    </location>
</feature>
<feature type="disulfide bond" evidence="2">
    <location>
        <begin position="215"/>
        <end position="236"/>
    </location>
</feature>
<feature type="disulfide bond" evidence="2">
    <location>
        <begin position="224"/>
        <end position="240"/>
    </location>
</feature>
<reference key="1">
    <citation type="journal article" date="1992" name="Nature">
        <title>The C. elegans genome sequencing project: a beginning.</title>
        <authorList>
            <person name="Sulston J."/>
            <person name="Du Z."/>
            <person name="Thomas K."/>
            <person name="Wilson R."/>
            <person name="Hillier L."/>
            <person name="Staden R."/>
            <person name="Halloran N."/>
            <person name="Green P."/>
            <person name="Thierry-Mieg J."/>
            <person name="Qiu L."/>
            <person name="Dear S."/>
            <person name="Coulson A."/>
            <person name="Craxton M."/>
            <person name="Durbin R."/>
            <person name="Berks M."/>
            <person name="Metzstein M."/>
            <person name="Hawkins T."/>
            <person name="Ainscough R."/>
            <person name="Waterston R."/>
        </authorList>
    </citation>
    <scope>NUCLEOTIDE SEQUENCE [LARGE SCALE GENOMIC DNA]</scope>
    <source>
        <strain>Bristol N2</strain>
    </source>
</reference>
<reference key="2">
    <citation type="journal article" date="1998" name="Science">
        <title>Genome sequence of the nematode C. elegans: a platform for investigating biology.</title>
        <authorList>
            <consortium name="The C. elegans sequencing consortium"/>
        </authorList>
    </citation>
    <scope>NUCLEOTIDE SEQUENCE [LARGE SCALE GENOMIC DNA]</scope>
    <source>
        <strain>Bristol N2</strain>
    </source>
</reference>
<name>YOW6_CAEEL</name>
<gene>
    <name type="ORF">ZK643.6</name>
</gene>